<feature type="signal peptide" evidence="2">
    <location>
        <begin position="1"/>
        <end position="15"/>
    </location>
</feature>
<feature type="propeptide" id="PRO_0000026988" evidence="4">
    <location>
        <begin position="16"/>
        <end position="102"/>
    </location>
</feature>
<feature type="chain" id="PRO_0000026989" description="Alkaline serine protease ver112" evidence="4">
    <location>
        <begin position="103"/>
        <end position="382"/>
    </location>
</feature>
<feature type="domain" description="Inhibitor I9" evidence="2">
    <location>
        <begin position="56"/>
        <end position="99"/>
    </location>
</feature>
<feature type="domain" description="Peptidase S8" evidence="3">
    <location>
        <begin position="111"/>
        <end position="382"/>
    </location>
</feature>
<feature type="active site" description="Charge relay system" evidence="3">
    <location>
        <position position="143"/>
    </location>
</feature>
<feature type="active site" description="Charge relay system" evidence="3">
    <location>
        <position position="173"/>
    </location>
</feature>
<feature type="active site" description="Charge relay system" evidence="3">
    <location>
        <position position="328"/>
    </location>
</feature>
<feature type="disulfide bond" evidence="1">
    <location>
        <begin position="138"/>
        <end position="227"/>
    </location>
</feature>
<feature type="disulfide bond" evidence="1">
    <location>
        <begin position="282"/>
        <end position="353"/>
    </location>
</feature>
<feature type="strand" evidence="7">
    <location>
        <begin position="105"/>
        <end position="107"/>
    </location>
</feature>
<feature type="helix" evidence="7">
    <location>
        <begin position="112"/>
        <end position="117"/>
    </location>
</feature>
<feature type="strand" evidence="7">
    <location>
        <begin position="120"/>
        <end position="122"/>
    </location>
</feature>
<feature type="strand" evidence="7">
    <location>
        <begin position="126"/>
        <end position="129"/>
    </location>
</feature>
<feature type="turn" evidence="7">
    <location>
        <begin position="131"/>
        <end position="136"/>
    </location>
</feature>
<feature type="strand" evidence="7">
    <location>
        <begin position="137"/>
        <end position="144"/>
    </location>
</feature>
<feature type="helix" evidence="7">
    <location>
        <begin position="151"/>
        <end position="153"/>
    </location>
</feature>
<feature type="strand" evidence="7">
    <location>
        <begin position="157"/>
        <end position="162"/>
    </location>
</feature>
<feature type="strand" evidence="7">
    <location>
        <begin position="164"/>
        <end position="168"/>
    </location>
</feature>
<feature type="strand" evidence="7">
    <location>
        <begin position="170"/>
        <end position="172"/>
    </location>
</feature>
<feature type="helix" evidence="7">
    <location>
        <begin position="173"/>
        <end position="182"/>
    </location>
</feature>
<feature type="turn" evidence="7">
    <location>
        <begin position="184"/>
        <end position="186"/>
    </location>
</feature>
<feature type="strand" evidence="7">
    <location>
        <begin position="193"/>
        <end position="198"/>
    </location>
</feature>
<feature type="helix" evidence="7">
    <location>
        <begin position="208"/>
        <end position="221"/>
    </location>
</feature>
<feature type="helix" evidence="7">
    <location>
        <begin position="222"/>
        <end position="224"/>
    </location>
</feature>
<feature type="strand" evidence="7">
    <location>
        <begin position="230"/>
        <end position="235"/>
    </location>
</feature>
<feature type="helix" evidence="7">
    <location>
        <begin position="243"/>
        <end position="254"/>
    </location>
</feature>
<feature type="strand" evidence="7">
    <location>
        <begin position="258"/>
        <end position="262"/>
    </location>
</feature>
<feature type="strand" evidence="7">
    <location>
        <begin position="265"/>
        <end position="269"/>
    </location>
</feature>
<feature type="helix" evidence="7">
    <location>
        <begin position="270"/>
        <end position="272"/>
    </location>
</feature>
<feature type="turn" evidence="7">
    <location>
        <begin position="275"/>
        <end position="277"/>
    </location>
</feature>
<feature type="strand" evidence="7">
    <location>
        <begin position="281"/>
        <end position="287"/>
    </location>
</feature>
<feature type="strand" evidence="7">
    <location>
        <begin position="291"/>
        <end position="293"/>
    </location>
</feature>
<feature type="strand" evidence="7">
    <location>
        <begin position="305"/>
        <end position="308"/>
    </location>
</feature>
<feature type="strand" evidence="7">
    <location>
        <begin position="310"/>
        <end position="315"/>
    </location>
</feature>
<feature type="helix" evidence="7">
    <location>
        <begin position="317"/>
        <end position="319"/>
    </location>
</feature>
<feature type="strand" evidence="7">
    <location>
        <begin position="321"/>
        <end position="324"/>
    </location>
</feature>
<feature type="helix" evidence="7">
    <location>
        <begin position="327"/>
        <end position="344"/>
    </location>
</feature>
<feature type="turn" evidence="7">
    <location>
        <begin position="349"/>
        <end position="351"/>
    </location>
</feature>
<feature type="helix" evidence="7">
    <location>
        <begin position="352"/>
        <end position="359"/>
    </location>
</feature>
<feature type="strand" evidence="7">
    <location>
        <begin position="360"/>
        <end position="363"/>
    </location>
</feature>
<proteinExistence type="evidence at protein level"/>
<dbReference type="EC" id="3.4.21.-"/>
<dbReference type="EMBL" id="AY692148">
    <property type="protein sequence ID" value="AAU01968.1"/>
    <property type="molecule type" value="Genomic_DNA"/>
</dbReference>
<dbReference type="PDB" id="3F7M">
    <property type="method" value="X-ray"/>
    <property type="resolution" value="1.60 A"/>
    <property type="chains" value="A=104-382"/>
</dbReference>
<dbReference type="PDBsum" id="3F7M"/>
<dbReference type="SMR" id="Q68GV9"/>
<dbReference type="MEROPS" id="S08.056"/>
<dbReference type="EvolutionaryTrace" id="Q68GV9"/>
<dbReference type="GO" id="GO:0005576">
    <property type="term" value="C:extracellular region"/>
    <property type="evidence" value="ECO:0007669"/>
    <property type="project" value="UniProtKB-SubCell"/>
</dbReference>
<dbReference type="GO" id="GO:0004252">
    <property type="term" value="F:serine-type endopeptidase activity"/>
    <property type="evidence" value="ECO:0007669"/>
    <property type="project" value="InterPro"/>
</dbReference>
<dbReference type="GO" id="GO:0006508">
    <property type="term" value="P:proteolysis"/>
    <property type="evidence" value="ECO:0007669"/>
    <property type="project" value="UniProtKB-KW"/>
</dbReference>
<dbReference type="CDD" id="cd04077">
    <property type="entry name" value="Peptidases_S8_PCSK9_ProteinaseK_like"/>
    <property type="match status" value="1"/>
</dbReference>
<dbReference type="FunFam" id="3.40.50.200:FF:000014">
    <property type="entry name" value="Proteinase K"/>
    <property type="match status" value="1"/>
</dbReference>
<dbReference type="Gene3D" id="3.30.70.80">
    <property type="entry name" value="Peptidase S8 propeptide/proteinase inhibitor I9"/>
    <property type="match status" value="1"/>
</dbReference>
<dbReference type="Gene3D" id="3.40.50.200">
    <property type="entry name" value="Peptidase S8/S53 domain"/>
    <property type="match status" value="1"/>
</dbReference>
<dbReference type="InterPro" id="IPR034193">
    <property type="entry name" value="PCSK9_ProteinaseK-like"/>
</dbReference>
<dbReference type="InterPro" id="IPR000209">
    <property type="entry name" value="Peptidase_S8/S53_dom"/>
</dbReference>
<dbReference type="InterPro" id="IPR036852">
    <property type="entry name" value="Peptidase_S8/S53_dom_sf"/>
</dbReference>
<dbReference type="InterPro" id="IPR023827">
    <property type="entry name" value="Peptidase_S8_Asp-AS"/>
</dbReference>
<dbReference type="InterPro" id="IPR022398">
    <property type="entry name" value="Peptidase_S8_His-AS"/>
</dbReference>
<dbReference type="InterPro" id="IPR023828">
    <property type="entry name" value="Peptidase_S8_Ser-AS"/>
</dbReference>
<dbReference type="InterPro" id="IPR050131">
    <property type="entry name" value="Peptidase_S8_subtilisin-like"/>
</dbReference>
<dbReference type="InterPro" id="IPR015500">
    <property type="entry name" value="Peptidase_S8_subtilisin-rel"/>
</dbReference>
<dbReference type="InterPro" id="IPR010259">
    <property type="entry name" value="S8pro/Inhibitor_I9"/>
</dbReference>
<dbReference type="InterPro" id="IPR037045">
    <property type="entry name" value="S8pro/Inhibitor_I9_sf"/>
</dbReference>
<dbReference type="PANTHER" id="PTHR43806:SF58">
    <property type="entry name" value="ALKALINE PROTEASE 1-RELATED"/>
    <property type="match status" value="1"/>
</dbReference>
<dbReference type="PANTHER" id="PTHR43806">
    <property type="entry name" value="PEPTIDASE S8"/>
    <property type="match status" value="1"/>
</dbReference>
<dbReference type="Pfam" id="PF05922">
    <property type="entry name" value="Inhibitor_I9"/>
    <property type="match status" value="1"/>
</dbReference>
<dbReference type="Pfam" id="PF00082">
    <property type="entry name" value="Peptidase_S8"/>
    <property type="match status" value="1"/>
</dbReference>
<dbReference type="PRINTS" id="PR00723">
    <property type="entry name" value="SUBTILISIN"/>
</dbReference>
<dbReference type="SUPFAM" id="SSF54897">
    <property type="entry name" value="Protease propeptides/inhibitors"/>
    <property type="match status" value="1"/>
</dbReference>
<dbReference type="SUPFAM" id="SSF52743">
    <property type="entry name" value="Subtilisin-like"/>
    <property type="match status" value="1"/>
</dbReference>
<dbReference type="PROSITE" id="PS51892">
    <property type="entry name" value="SUBTILASE"/>
    <property type="match status" value="1"/>
</dbReference>
<dbReference type="PROSITE" id="PS00136">
    <property type="entry name" value="SUBTILASE_ASP"/>
    <property type="match status" value="1"/>
</dbReference>
<dbReference type="PROSITE" id="PS00137">
    <property type="entry name" value="SUBTILASE_HIS"/>
    <property type="match status" value="1"/>
</dbReference>
<dbReference type="PROSITE" id="PS00138">
    <property type="entry name" value="SUBTILASE_SER"/>
    <property type="match status" value="1"/>
</dbReference>
<sequence>MRLSIIAAVLPLALAAPVAEPEIAPLIEARGAQPIAGKYIVKLKDEAKFGIMNAKSKIPGIERVYENVLNGFSATLSNEELERLRRDPDVESIEQDAIFSINAITQQQGATWGLTRISHRARGSTAYAYDTSAGAGACVYVIDTGVEDTHPDFEGRAKQIKSYASTARDGHGHGTHCAGTIGSKTWGVAKKVSIFGVKVLDDSGSGSLSNIVAGMDFVASDRQSRNCPRRTVASMSLGGGYSAALNQAAARLQSSGVFVAVAAGNDNRDAANTSPASEPTVCTVGATDSNDVRSTFSNYGRVVDIFAPGTSITSTWIGGRTNTISGTSMATPHIAGLAAYLFGLEGGSAGAMCGRIQTLSTKNVLTSIPSGTVNYLAFNGAT</sequence>
<accession>Q68GV9</accession>
<evidence type="ECO:0000250" key="1">
    <source>
        <dbReference type="UniProtKB" id="P06873"/>
    </source>
</evidence>
<evidence type="ECO:0000255" key="2"/>
<evidence type="ECO:0000255" key="3">
    <source>
        <dbReference type="PROSITE-ProRule" id="PRU01240"/>
    </source>
</evidence>
<evidence type="ECO:0000269" key="4">
    <source>
    </source>
</evidence>
<evidence type="ECO:0000305" key="5"/>
<evidence type="ECO:0000312" key="6">
    <source>
        <dbReference type="EMBL" id="AAU01968.1"/>
    </source>
</evidence>
<evidence type="ECO:0007829" key="7">
    <source>
        <dbReference type="PDB" id="3F7M"/>
    </source>
</evidence>
<comment type="function">
    <text evidence="4">Serine protease which can degrade the nematode cuticle.</text>
</comment>
<comment type="activity regulation">
    <text evidence="4">Inhibited by phenylmethylsulfonyl fluoride (PMSF).</text>
</comment>
<comment type="biophysicochemical properties">
    <phDependence>
        <text evidence="4">Optimum pH is 9-10.</text>
    </phDependence>
    <temperatureDependence>
        <text evidence="4">Optimum temperature is 60-70 degrees Celsius.</text>
    </temperatureDependence>
</comment>
<comment type="subcellular location">
    <subcellularLocation>
        <location evidence="4">Secreted</location>
    </subcellularLocation>
</comment>
<comment type="similarity">
    <text evidence="2">Belongs to the peptidase S8 family.</text>
</comment>
<protein>
    <recommendedName>
        <fullName>Alkaline serine protease ver112</fullName>
        <ecNumber>3.4.21.-</ecNumber>
    </recommendedName>
</protein>
<reference evidence="5 6" key="1">
    <citation type="submission" date="2004-07" db="EMBL/GenBank/DDBJ databases">
        <authorList>
            <person name="Yang J.-K."/>
            <person name="Huang X.-W."/>
            <person name="Tian B.-Y."/>
            <person name="Zhang K.-Q."/>
        </authorList>
    </citation>
    <scope>NUCLEOTIDE SEQUENCE [GENOMIC DNA]</scope>
    <source>
        <strain evidence="6">YMF1.00112</strain>
    </source>
</reference>
<reference key="2">
    <citation type="journal article" date="2005" name="Biotechnol. Lett.">
        <title>Isolation and characterization of a serine protease from the Nematophagous Fungus, Lecanicillium psalliotae, displaying nematicidal activity.</title>
        <authorList>
            <person name="Yang J.-K."/>
            <person name="Huang X.-W."/>
            <person name="Tian B.-Y."/>
            <person name="Wang M."/>
            <person name="Niu Q.-H."/>
            <person name="Zhang K.-Q."/>
        </authorList>
    </citation>
    <scope>PROTEIN SEQUENCE OF 103-112</scope>
    <scope>FUNCTION</scope>
    <scope>BIOPHYSICOCHEMICAL PROPERTIES</scope>
    <scope>SUBCELLULAR LOCATION</scope>
</reference>
<name>ALP_CORPA</name>
<keyword id="KW-0002">3D-structure</keyword>
<keyword id="KW-0903">Direct protein sequencing</keyword>
<keyword id="KW-1015">Disulfide bond</keyword>
<keyword id="KW-0378">Hydrolase</keyword>
<keyword id="KW-0645">Protease</keyword>
<keyword id="KW-0964">Secreted</keyword>
<keyword id="KW-0720">Serine protease</keyword>
<keyword id="KW-0732">Signal</keyword>
<keyword id="KW-0865">Zymogen</keyword>
<organism>
    <name type="scientific">Corniculantispora psalliotae</name>
    <name type="common">Lecanicillium psalliotae</name>
    <dbReference type="NCBI Taxonomy" id="73499"/>
    <lineage>
        <taxon>Eukaryota</taxon>
        <taxon>Fungi</taxon>
        <taxon>Dikarya</taxon>
        <taxon>Ascomycota</taxon>
        <taxon>Pezizomycotina</taxon>
        <taxon>Sordariomycetes</taxon>
        <taxon>Hypocreomycetidae</taxon>
        <taxon>Hypocreales</taxon>
        <taxon>Cordycipitaceae</taxon>
        <taxon>Corniculantispora</taxon>
    </lineage>
</organism>